<organism>
    <name type="scientific">Yersinia pseudotuberculosis serotype IB (strain PB1/+)</name>
    <dbReference type="NCBI Taxonomy" id="502801"/>
    <lineage>
        <taxon>Bacteria</taxon>
        <taxon>Pseudomonadati</taxon>
        <taxon>Pseudomonadota</taxon>
        <taxon>Gammaproteobacteria</taxon>
        <taxon>Enterobacterales</taxon>
        <taxon>Yersiniaceae</taxon>
        <taxon>Yersinia</taxon>
    </lineage>
</organism>
<name>FPG_YERPB</name>
<feature type="initiator methionine" description="Removed" evidence="1">
    <location>
        <position position="1"/>
    </location>
</feature>
<feature type="chain" id="PRO_1000094088" description="Formamidopyrimidine-DNA glycosylase">
    <location>
        <begin position="2"/>
        <end position="269"/>
    </location>
</feature>
<feature type="zinc finger region" description="FPG-type" evidence="2">
    <location>
        <begin position="235"/>
        <end position="269"/>
    </location>
</feature>
<feature type="active site" description="Schiff-base intermediate with DNA" evidence="2">
    <location>
        <position position="2"/>
    </location>
</feature>
<feature type="active site" description="Proton donor" evidence="2">
    <location>
        <position position="3"/>
    </location>
</feature>
<feature type="active site" description="Proton donor; for beta-elimination activity" evidence="2">
    <location>
        <position position="57"/>
    </location>
</feature>
<feature type="active site" description="Proton donor; for delta-elimination activity" evidence="2">
    <location>
        <position position="259"/>
    </location>
</feature>
<feature type="binding site" evidence="2">
    <location>
        <position position="90"/>
    </location>
    <ligand>
        <name>DNA</name>
        <dbReference type="ChEBI" id="CHEBI:16991"/>
    </ligand>
</feature>
<feature type="binding site" evidence="2">
    <location>
        <position position="109"/>
    </location>
    <ligand>
        <name>DNA</name>
        <dbReference type="ChEBI" id="CHEBI:16991"/>
    </ligand>
</feature>
<feature type="binding site" evidence="2">
    <location>
        <position position="150"/>
    </location>
    <ligand>
        <name>DNA</name>
        <dbReference type="ChEBI" id="CHEBI:16991"/>
    </ligand>
</feature>
<keyword id="KW-0227">DNA damage</keyword>
<keyword id="KW-0234">DNA repair</keyword>
<keyword id="KW-0238">DNA-binding</keyword>
<keyword id="KW-0326">Glycosidase</keyword>
<keyword id="KW-0378">Hydrolase</keyword>
<keyword id="KW-0456">Lyase</keyword>
<keyword id="KW-0479">Metal-binding</keyword>
<keyword id="KW-0511">Multifunctional enzyme</keyword>
<keyword id="KW-0862">Zinc</keyword>
<keyword id="KW-0863">Zinc-finger</keyword>
<proteinExistence type="inferred from homology"/>
<reference key="1">
    <citation type="submission" date="2008-04" db="EMBL/GenBank/DDBJ databases">
        <title>Complete sequence of Yersinia pseudotuberculosis PB1/+.</title>
        <authorList>
            <person name="Copeland A."/>
            <person name="Lucas S."/>
            <person name="Lapidus A."/>
            <person name="Glavina del Rio T."/>
            <person name="Dalin E."/>
            <person name="Tice H."/>
            <person name="Bruce D."/>
            <person name="Goodwin L."/>
            <person name="Pitluck S."/>
            <person name="Munk A.C."/>
            <person name="Brettin T."/>
            <person name="Detter J.C."/>
            <person name="Han C."/>
            <person name="Tapia R."/>
            <person name="Schmutz J."/>
            <person name="Larimer F."/>
            <person name="Land M."/>
            <person name="Hauser L."/>
            <person name="Challacombe J.F."/>
            <person name="Green L."/>
            <person name="Lindler L.E."/>
            <person name="Nikolich M.P."/>
            <person name="Richardson P."/>
        </authorList>
    </citation>
    <scope>NUCLEOTIDE SEQUENCE [LARGE SCALE GENOMIC DNA]</scope>
    <source>
        <strain>PB1/+</strain>
    </source>
</reference>
<comment type="function">
    <text evidence="2">Involved in base excision repair of DNA damaged by oxidation or by mutagenic agents. Acts as a DNA glycosylase that recognizes and removes damaged bases. Has a preference for oxidized purines, such as 7,8-dihydro-8-oxoguanine (8-oxoG). Has AP (apurinic/apyrimidinic) lyase activity and introduces nicks in the DNA strand. Cleaves the DNA backbone by beta-delta elimination to generate a single-strand break at the site of the removed base with both 3'- and 5'-phosphates.</text>
</comment>
<comment type="catalytic activity">
    <reaction evidence="2">
        <text>Hydrolysis of DNA containing ring-opened 7-methylguanine residues, releasing 2,6-diamino-4-hydroxy-5-(N-methyl)formamidopyrimidine.</text>
        <dbReference type="EC" id="3.2.2.23"/>
    </reaction>
</comment>
<comment type="catalytic activity">
    <reaction evidence="2">
        <text>2'-deoxyribonucleotide-(2'-deoxyribose 5'-phosphate)-2'-deoxyribonucleotide-DNA = a 3'-end 2'-deoxyribonucleotide-(2,3-dehydro-2,3-deoxyribose 5'-phosphate)-DNA + a 5'-end 5'-phospho-2'-deoxyribonucleoside-DNA + H(+)</text>
        <dbReference type="Rhea" id="RHEA:66592"/>
        <dbReference type="Rhea" id="RHEA-COMP:13180"/>
        <dbReference type="Rhea" id="RHEA-COMP:16897"/>
        <dbReference type="Rhea" id="RHEA-COMP:17067"/>
        <dbReference type="ChEBI" id="CHEBI:15378"/>
        <dbReference type="ChEBI" id="CHEBI:136412"/>
        <dbReference type="ChEBI" id="CHEBI:157695"/>
        <dbReference type="ChEBI" id="CHEBI:167181"/>
        <dbReference type="EC" id="4.2.99.18"/>
    </reaction>
</comment>
<comment type="cofactor">
    <cofactor evidence="2">
        <name>Zn(2+)</name>
        <dbReference type="ChEBI" id="CHEBI:29105"/>
    </cofactor>
    <text evidence="2">Binds 1 zinc ion per subunit.</text>
</comment>
<comment type="subunit">
    <text evidence="2">Monomer.</text>
</comment>
<comment type="similarity">
    <text evidence="2">Belongs to the FPG family.</text>
</comment>
<sequence length="269" mass="30111">MPELPEVETSRRGIEPYLVGQTILYAVVRNARLRWPVSDEILTLSDQPVLSVQRRAKYLLLELPKGWIIIHLGMSGSLRVLSEETAAEKHDHVDLVVSNGKILRYTDPRRFGAWLWAKDLETSNVLAHLGPEPLSDEFTAQYLFDKSRNKRTLIKPWLMDNKVVVGVGNIYASESLFAAGILPDRAAGSLTDAESVLLVATIKAVLLHSIEQGGTTLRDFLQSDGKPGYFAQELQVYGRAGEPCRQCGHPIEIAKHGQRSTFFCRHCQH</sequence>
<evidence type="ECO:0000250" key="1"/>
<evidence type="ECO:0000255" key="2">
    <source>
        <dbReference type="HAMAP-Rule" id="MF_00103"/>
    </source>
</evidence>
<gene>
    <name evidence="2" type="primary">mutM</name>
    <name evidence="2" type="synonym">fpg</name>
    <name type="ordered locus">YPTS_0051</name>
</gene>
<protein>
    <recommendedName>
        <fullName evidence="2">Formamidopyrimidine-DNA glycosylase</fullName>
        <shortName evidence="2">Fapy-DNA glycosylase</shortName>
        <ecNumber evidence="2">3.2.2.23</ecNumber>
    </recommendedName>
    <alternativeName>
        <fullName evidence="2">DNA-(apurinic or apyrimidinic site) lyase MutM</fullName>
        <shortName evidence="2">AP lyase MutM</shortName>
        <ecNumber evidence="2">4.2.99.18</ecNumber>
    </alternativeName>
</protein>
<accession>B2JYN6</accession>
<dbReference type="EC" id="3.2.2.23" evidence="2"/>
<dbReference type="EC" id="4.2.99.18" evidence="2"/>
<dbReference type="EMBL" id="CP001048">
    <property type="protein sequence ID" value="ACC87050.1"/>
    <property type="molecule type" value="Genomic_DNA"/>
</dbReference>
<dbReference type="RefSeq" id="WP_002208989.1">
    <property type="nucleotide sequence ID" value="NZ_CP009780.1"/>
</dbReference>
<dbReference type="SMR" id="B2JYN6"/>
<dbReference type="GeneID" id="57974538"/>
<dbReference type="KEGG" id="ypb:YPTS_0051"/>
<dbReference type="PATRIC" id="fig|502801.10.peg.3727"/>
<dbReference type="GO" id="GO:0034039">
    <property type="term" value="F:8-oxo-7,8-dihydroguanine DNA N-glycosylase activity"/>
    <property type="evidence" value="ECO:0007669"/>
    <property type="project" value="TreeGrafter"/>
</dbReference>
<dbReference type="GO" id="GO:0140078">
    <property type="term" value="F:class I DNA-(apurinic or apyrimidinic site) endonuclease activity"/>
    <property type="evidence" value="ECO:0007669"/>
    <property type="project" value="UniProtKB-EC"/>
</dbReference>
<dbReference type="GO" id="GO:0003684">
    <property type="term" value="F:damaged DNA binding"/>
    <property type="evidence" value="ECO:0007669"/>
    <property type="project" value="InterPro"/>
</dbReference>
<dbReference type="GO" id="GO:0008270">
    <property type="term" value="F:zinc ion binding"/>
    <property type="evidence" value="ECO:0007669"/>
    <property type="project" value="UniProtKB-UniRule"/>
</dbReference>
<dbReference type="GO" id="GO:0006284">
    <property type="term" value="P:base-excision repair"/>
    <property type="evidence" value="ECO:0007669"/>
    <property type="project" value="InterPro"/>
</dbReference>
<dbReference type="CDD" id="cd08966">
    <property type="entry name" value="EcFpg-like_N"/>
    <property type="match status" value="1"/>
</dbReference>
<dbReference type="FunFam" id="1.10.8.50:FF:000003">
    <property type="entry name" value="Formamidopyrimidine-DNA glycosylase"/>
    <property type="match status" value="1"/>
</dbReference>
<dbReference type="FunFam" id="3.20.190.10:FF:000001">
    <property type="entry name" value="Formamidopyrimidine-DNA glycosylase"/>
    <property type="match status" value="1"/>
</dbReference>
<dbReference type="Gene3D" id="1.10.8.50">
    <property type="match status" value="1"/>
</dbReference>
<dbReference type="Gene3D" id="3.20.190.10">
    <property type="entry name" value="MutM-like, N-terminal"/>
    <property type="match status" value="1"/>
</dbReference>
<dbReference type="HAMAP" id="MF_00103">
    <property type="entry name" value="Fapy_DNA_glycosyl"/>
    <property type="match status" value="1"/>
</dbReference>
<dbReference type="InterPro" id="IPR015886">
    <property type="entry name" value="DNA_glyclase/AP_lyase_DNA-bd"/>
</dbReference>
<dbReference type="InterPro" id="IPR015887">
    <property type="entry name" value="DNA_glyclase_Znf_dom_DNA_BS"/>
</dbReference>
<dbReference type="InterPro" id="IPR020629">
    <property type="entry name" value="Formamido-pyr_DNA_Glyclase"/>
</dbReference>
<dbReference type="InterPro" id="IPR012319">
    <property type="entry name" value="FPG_cat"/>
</dbReference>
<dbReference type="InterPro" id="IPR035937">
    <property type="entry name" value="MutM-like_N-ter"/>
</dbReference>
<dbReference type="InterPro" id="IPR010979">
    <property type="entry name" value="Ribosomal_uS13-like_H2TH"/>
</dbReference>
<dbReference type="InterPro" id="IPR000214">
    <property type="entry name" value="Znf_DNA_glyclase/AP_lyase"/>
</dbReference>
<dbReference type="InterPro" id="IPR010663">
    <property type="entry name" value="Znf_FPG/IleRS"/>
</dbReference>
<dbReference type="NCBIfam" id="TIGR00577">
    <property type="entry name" value="fpg"/>
    <property type="match status" value="1"/>
</dbReference>
<dbReference type="NCBIfam" id="NF002211">
    <property type="entry name" value="PRK01103.1"/>
    <property type="match status" value="1"/>
</dbReference>
<dbReference type="PANTHER" id="PTHR22993">
    <property type="entry name" value="FORMAMIDOPYRIMIDINE-DNA GLYCOSYLASE"/>
    <property type="match status" value="1"/>
</dbReference>
<dbReference type="PANTHER" id="PTHR22993:SF9">
    <property type="entry name" value="FORMAMIDOPYRIMIDINE-DNA GLYCOSYLASE"/>
    <property type="match status" value="1"/>
</dbReference>
<dbReference type="Pfam" id="PF01149">
    <property type="entry name" value="Fapy_DNA_glyco"/>
    <property type="match status" value="1"/>
</dbReference>
<dbReference type="Pfam" id="PF06831">
    <property type="entry name" value="H2TH"/>
    <property type="match status" value="1"/>
</dbReference>
<dbReference type="Pfam" id="PF06827">
    <property type="entry name" value="zf-FPG_IleRS"/>
    <property type="match status" value="1"/>
</dbReference>
<dbReference type="SMART" id="SM00898">
    <property type="entry name" value="Fapy_DNA_glyco"/>
    <property type="match status" value="1"/>
</dbReference>
<dbReference type="SMART" id="SM01232">
    <property type="entry name" value="H2TH"/>
    <property type="match status" value="1"/>
</dbReference>
<dbReference type="SUPFAM" id="SSF57716">
    <property type="entry name" value="Glucocorticoid receptor-like (DNA-binding domain)"/>
    <property type="match status" value="1"/>
</dbReference>
<dbReference type="SUPFAM" id="SSF81624">
    <property type="entry name" value="N-terminal domain of MutM-like DNA repair proteins"/>
    <property type="match status" value="1"/>
</dbReference>
<dbReference type="SUPFAM" id="SSF46946">
    <property type="entry name" value="S13-like H2TH domain"/>
    <property type="match status" value="1"/>
</dbReference>
<dbReference type="PROSITE" id="PS51068">
    <property type="entry name" value="FPG_CAT"/>
    <property type="match status" value="1"/>
</dbReference>
<dbReference type="PROSITE" id="PS01242">
    <property type="entry name" value="ZF_FPG_1"/>
    <property type="match status" value="1"/>
</dbReference>
<dbReference type="PROSITE" id="PS51066">
    <property type="entry name" value="ZF_FPG_2"/>
    <property type="match status" value="1"/>
</dbReference>